<name>R9BPB_XENLA</name>
<keyword id="KW-0175">Coiled coil</keyword>
<keyword id="KW-0472">Membrane</keyword>
<keyword id="KW-1185">Reference proteome</keyword>
<keyword id="KW-0734">Signal transduction inhibitor</keyword>
<keyword id="KW-0812">Transmembrane</keyword>
<keyword id="KW-1133">Transmembrane helix</keyword>
<organism>
    <name type="scientific">Xenopus laevis</name>
    <name type="common">African clawed frog</name>
    <dbReference type="NCBI Taxonomy" id="8355"/>
    <lineage>
        <taxon>Eukaryota</taxon>
        <taxon>Metazoa</taxon>
        <taxon>Chordata</taxon>
        <taxon>Craniata</taxon>
        <taxon>Vertebrata</taxon>
        <taxon>Euteleostomi</taxon>
        <taxon>Amphibia</taxon>
        <taxon>Batrachia</taxon>
        <taxon>Anura</taxon>
        <taxon>Pipoidea</taxon>
        <taxon>Pipidae</taxon>
        <taxon>Xenopodinae</taxon>
        <taxon>Xenopus</taxon>
        <taxon>Xenopus</taxon>
    </lineage>
</organism>
<gene>
    <name type="primary">rgs9bp-b</name>
</gene>
<sequence length="251" mass="28085">MPLQNVKVADEGSVNFQKVKEECITAMESLHKVVACYRHLALTIGGSSDSIHLRDELRRTRERAQELALSNRNKLTTALRDKKLSKKDREELERLWVEFSSCLELFHNDMCKVYELGMAVPHSATNKPAIQTGSTGNTSAIASRALNVQNINYSDSPANKASLEYQEIEEEILKVDNMITDMEMKVNVLRWTVEANTRMNDELKSTHDSSSVVLLSEEESNSKGCCSDGQLIVFLLLCGTALVAITLYSIL</sequence>
<evidence type="ECO:0000250" key="1"/>
<evidence type="ECO:0000255" key="2"/>
<evidence type="ECO:0000305" key="3"/>
<feature type="chain" id="PRO_0000287591" description="Regulator of G-protein signaling 9-binding protein B">
    <location>
        <begin position="1"/>
        <end position="251"/>
    </location>
</feature>
<feature type="topological domain" description="Cytoplasmic" evidence="2">
    <location>
        <begin position="1"/>
        <end position="230"/>
    </location>
</feature>
<feature type="transmembrane region" description="Helical; Anchor for type IV membrane protein" evidence="2">
    <location>
        <begin position="231"/>
        <end position="250"/>
    </location>
</feature>
<feature type="topological domain" description="Extracellular" evidence="2">
    <location>
        <position position="251"/>
    </location>
</feature>
<feature type="coiled-coil region" evidence="2">
    <location>
        <begin position="52"/>
        <end position="94"/>
    </location>
</feature>
<feature type="coiled-coil region" evidence="2">
    <location>
        <begin position="158"/>
        <end position="187"/>
    </location>
</feature>
<protein>
    <recommendedName>
        <fullName>Regulator of G-protein signaling 9-binding protein B</fullName>
    </recommendedName>
    <alternativeName>
        <fullName>RGS9-anchoring protein B</fullName>
    </alternativeName>
</protein>
<reference key="1">
    <citation type="submission" date="2004-06" db="EMBL/GenBank/DDBJ databases">
        <authorList>
            <consortium name="NIH - Xenopus Gene Collection (XGC) project"/>
        </authorList>
    </citation>
    <scope>NUCLEOTIDE SEQUENCE [LARGE SCALE MRNA]</scope>
    <source>
        <tissue>Brain</tissue>
    </source>
</reference>
<accession>Q6GLX4</accession>
<dbReference type="EMBL" id="BC074320">
    <property type="protein sequence ID" value="AAH74320.1"/>
    <property type="molecule type" value="mRNA"/>
</dbReference>
<dbReference type="RefSeq" id="NP_001086202.1">
    <property type="nucleotide sequence ID" value="NM_001092733.1"/>
</dbReference>
<dbReference type="SMR" id="Q6GLX4"/>
<dbReference type="DNASU" id="444631"/>
<dbReference type="GeneID" id="444631"/>
<dbReference type="KEGG" id="xla:444631"/>
<dbReference type="AGR" id="Xenbase:XB-GENE-5863414"/>
<dbReference type="CTD" id="444631"/>
<dbReference type="Xenbase" id="XB-GENE-5863414">
    <property type="gene designation" value="rgs9bp-c.L"/>
</dbReference>
<dbReference type="OMA" id="CRRSQMF"/>
<dbReference type="OrthoDB" id="6358515at2759"/>
<dbReference type="Proteomes" id="UP000186698">
    <property type="component" value="Chromosome 6L"/>
</dbReference>
<dbReference type="Bgee" id="444631">
    <property type="expression patterns" value="Expressed in camera-type eye and 1 other cell type or tissue"/>
</dbReference>
<dbReference type="GO" id="GO:0016020">
    <property type="term" value="C:membrane"/>
    <property type="evidence" value="ECO:0007669"/>
    <property type="project" value="UniProtKB-SubCell"/>
</dbReference>
<dbReference type="GO" id="GO:0043005">
    <property type="term" value="C:neuron projection"/>
    <property type="evidence" value="ECO:0000318"/>
    <property type="project" value="GO_Central"/>
</dbReference>
<dbReference type="GO" id="GO:0007186">
    <property type="term" value="P:G protein-coupled receptor signaling pathway"/>
    <property type="evidence" value="ECO:0000318"/>
    <property type="project" value="GO_Central"/>
</dbReference>
<dbReference type="GO" id="GO:0009968">
    <property type="term" value="P:negative regulation of signal transduction"/>
    <property type="evidence" value="ECO:0007669"/>
    <property type="project" value="UniProtKB-KW"/>
</dbReference>
<dbReference type="InterPro" id="IPR026512">
    <property type="entry name" value="RGS7BP/RGS9BP"/>
</dbReference>
<dbReference type="PANTHER" id="PTHR21029">
    <property type="entry name" value="R-SEVEN BINDING PROTEIN (R7BP) HOMOLOG"/>
    <property type="match status" value="1"/>
</dbReference>
<comment type="function">
    <text>Regulator of G protein-coupled receptor (GPCR) signaling. Probably acts by regulating the activity of some 'R7' family protein (RGS6, RGS7, RGS9 and/or RGS11).</text>
</comment>
<comment type="subcellular location">
    <subcellularLocation>
        <location evidence="1">Membrane</location>
        <topology evidence="1">Single-pass type IV membrane protein</topology>
    </subcellularLocation>
</comment>
<comment type="similarity">
    <text evidence="3">Belongs to the RGS7BP/RGS9BP family.</text>
</comment>
<proteinExistence type="evidence at transcript level"/>